<keyword id="KW-0274">FAD</keyword>
<keyword id="KW-0285">Flavoprotein</keyword>
<keyword id="KW-0521">NADP</keyword>
<keyword id="KW-0560">Oxidoreductase</keyword>
<proteinExistence type="inferred from homology"/>
<evidence type="ECO:0000255" key="1">
    <source>
        <dbReference type="HAMAP-Rule" id="MF_01685"/>
    </source>
</evidence>
<dbReference type="EC" id="1.18.1.2" evidence="1"/>
<dbReference type="EMBL" id="CP001101">
    <property type="protein sequence ID" value="ACE04651.1"/>
    <property type="molecule type" value="Genomic_DNA"/>
</dbReference>
<dbReference type="SMR" id="B3EKW5"/>
<dbReference type="STRING" id="331678.Cphamn1_1733"/>
<dbReference type="KEGG" id="cpb:Cphamn1_1733"/>
<dbReference type="eggNOG" id="COG0492">
    <property type="taxonomic scope" value="Bacteria"/>
</dbReference>
<dbReference type="HOGENOM" id="CLU_031864_5_5_10"/>
<dbReference type="OrthoDB" id="9806179at2"/>
<dbReference type="GO" id="GO:0004324">
    <property type="term" value="F:ferredoxin-NADP+ reductase activity"/>
    <property type="evidence" value="ECO:0007669"/>
    <property type="project" value="UniProtKB-UniRule"/>
</dbReference>
<dbReference type="GO" id="GO:0050660">
    <property type="term" value="F:flavin adenine dinucleotide binding"/>
    <property type="evidence" value="ECO:0007669"/>
    <property type="project" value="UniProtKB-UniRule"/>
</dbReference>
<dbReference type="GO" id="GO:0050661">
    <property type="term" value="F:NADP binding"/>
    <property type="evidence" value="ECO:0007669"/>
    <property type="project" value="UniProtKB-UniRule"/>
</dbReference>
<dbReference type="Gene3D" id="3.50.50.60">
    <property type="entry name" value="FAD/NAD(P)-binding domain"/>
    <property type="match status" value="2"/>
</dbReference>
<dbReference type="HAMAP" id="MF_01685">
    <property type="entry name" value="FENR2"/>
    <property type="match status" value="1"/>
</dbReference>
<dbReference type="InterPro" id="IPR036188">
    <property type="entry name" value="FAD/NAD-bd_sf"/>
</dbReference>
<dbReference type="InterPro" id="IPR023753">
    <property type="entry name" value="FAD/NAD-binding_dom"/>
</dbReference>
<dbReference type="InterPro" id="IPR022890">
    <property type="entry name" value="Fd--NADP_Rdtase_type_2"/>
</dbReference>
<dbReference type="InterPro" id="IPR050097">
    <property type="entry name" value="Ferredoxin-NADP_redctase_2"/>
</dbReference>
<dbReference type="PANTHER" id="PTHR48105">
    <property type="entry name" value="THIOREDOXIN REDUCTASE 1-RELATED-RELATED"/>
    <property type="match status" value="1"/>
</dbReference>
<dbReference type="Pfam" id="PF07992">
    <property type="entry name" value="Pyr_redox_2"/>
    <property type="match status" value="1"/>
</dbReference>
<dbReference type="PRINTS" id="PR00368">
    <property type="entry name" value="FADPNR"/>
</dbReference>
<dbReference type="PRINTS" id="PR00469">
    <property type="entry name" value="PNDRDTASEII"/>
</dbReference>
<dbReference type="SUPFAM" id="SSF51905">
    <property type="entry name" value="FAD/NAD(P)-binding domain"/>
    <property type="match status" value="1"/>
</dbReference>
<accession>B3EKW5</accession>
<protein>
    <recommendedName>
        <fullName evidence="1">Ferredoxin--NADP reductase</fullName>
        <shortName evidence="1">FNR</shortName>
        <shortName evidence="1">Fd-NADP(+) reductase</shortName>
        <ecNumber evidence="1">1.18.1.2</ecNumber>
    </recommendedName>
</protein>
<organism>
    <name type="scientific">Chlorobium phaeobacteroides (strain BS1)</name>
    <dbReference type="NCBI Taxonomy" id="331678"/>
    <lineage>
        <taxon>Bacteria</taxon>
        <taxon>Pseudomonadati</taxon>
        <taxon>Chlorobiota</taxon>
        <taxon>Chlorobiia</taxon>
        <taxon>Chlorobiales</taxon>
        <taxon>Chlorobiaceae</taxon>
        <taxon>Chlorobium/Pelodictyon group</taxon>
        <taxon>Chlorobium</taxon>
    </lineage>
</organism>
<name>FENR_CHLPB</name>
<sequence>MKENGDSVSGQDELCDLTIIGGGPTGIFAAFQCGMNNISCRIIESMPELGGQLTALYPEKHIYDVAAFPEVQASELVESLWGQAKRYDPEVVLDEQVRQYKKLDDGSFEVETLSGRTFASRALLVAAGLGAFSPRKLPQLGDISELEGHTVLYSVQNMKELEGKKVLIVGGGDSALDWAMMLLPHAEHITVAHRSPDFRAHGKTKDDLFAAAEKGLVDVHLNTEVIAIDHDGPALRHAYLRSKSGKETSLEAEYMLVLIGFKSDLGPLAEWGLELCENAMVVDSQMKTEVDGLYAAGDIAYYPGKLKIIQTGLSDATMAVRHCLNYIHPGEKIKQQFSSIKMAKEKNK</sequence>
<comment type="catalytic activity">
    <reaction evidence="1">
        <text>2 reduced [2Fe-2S]-[ferredoxin] + NADP(+) + H(+) = 2 oxidized [2Fe-2S]-[ferredoxin] + NADPH</text>
        <dbReference type="Rhea" id="RHEA:20125"/>
        <dbReference type="Rhea" id="RHEA-COMP:10000"/>
        <dbReference type="Rhea" id="RHEA-COMP:10001"/>
        <dbReference type="ChEBI" id="CHEBI:15378"/>
        <dbReference type="ChEBI" id="CHEBI:33737"/>
        <dbReference type="ChEBI" id="CHEBI:33738"/>
        <dbReference type="ChEBI" id="CHEBI:57783"/>
        <dbReference type="ChEBI" id="CHEBI:58349"/>
        <dbReference type="EC" id="1.18.1.2"/>
    </reaction>
</comment>
<comment type="cofactor">
    <cofactor evidence="1">
        <name>FAD</name>
        <dbReference type="ChEBI" id="CHEBI:57692"/>
    </cofactor>
    <text evidence="1">Binds 1 FAD per subunit.</text>
</comment>
<comment type="subunit">
    <text evidence="1">Homodimer.</text>
</comment>
<comment type="similarity">
    <text evidence="1">Belongs to the ferredoxin--NADP reductase type 2 family.</text>
</comment>
<reference key="1">
    <citation type="submission" date="2008-06" db="EMBL/GenBank/DDBJ databases">
        <title>Complete sequence of Chlorobium phaeobacteroides BS1.</title>
        <authorList>
            <consortium name="US DOE Joint Genome Institute"/>
            <person name="Lucas S."/>
            <person name="Copeland A."/>
            <person name="Lapidus A."/>
            <person name="Glavina del Rio T."/>
            <person name="Dalin E."/>
            <person name="Tice H."/>
            <person name="Bruce D."/>
            <person name="Goodwin L."/>
            <person name="Pitluck S."/>
            <person name="Schmutz J."/>
            <person name="Larimer F."/>
            <person name="Land M."/>
            <person name="Hauser L."/>
            <person name="Kyrpides N."/>
            <person name="Ovchinnikova G."/>
            <person name="Li T."/>
            <person name="Liu Z."/>
            <person name="Zhao F."/>
            <person name="Overmann J."/>
            <person name="Bryant D.A."/>
            <person name="Richardson P."/>
        </authorList>
    </citation>
    <scope>NUCLEOTIDE SEQUENCE [LARGE SCALE GENOMIC DNA]</scope>
    <source>
        <strain>BS1</strain>
    </source>
</reference>
<feature type="chain" id="PRO_0000364819" description="Ferredoxin--NADP reductase">
    <location>
        <begin position="1"/>
        <end position="348"/>
    </location>
</feature>
<feature type="binding site" evidence="1">
    <location>
        <position position="25"/>
    </location>
    <ligand>
        <name>FAD</name>
        <dbReference type="ChEBI" id="CHEBI:57692"/>
    </ligand>
</feature>
<feature type="binding site" evidence="1">
    <location>
        <position position="44"/>
    </location>
    <ligand>
        <name>FAD</name>
        <dbReference type="ChEBI" id="CHEBI:57692"/>
    </ligand>
</feature>
<feature type="binding site" evidence="1">
    <location>
        <position position="52"/>
    </location>
    <ligand>
        <name>FAD</name>
        <dbReference type="ChEBI" id="CHEBI:57692"/>
    </ligand>
</feature>
<feature type="binding site" evidence="1">
    <location>
        <position position="57"/>
    </location>
    <ligand>
        <name>FAD</name>
        <dbReference type="ChEBI" id="CHEBI:57692"/>
    </ligand>
</feature>
<feature type="binding site" evidence="1">
    <location>
        <position position="97"/>
    </location>
    <ligand>
        <name>FAD</name>
        <dbReference type="ChEBI" id="CHEBI:57692"/>
    </ligand>
</feature>
<feature type="binding site" evidence="1">
    <location>
        <position position="132"/>
    </location>
    <ligand>
        <name>FAD</name>
        <dbReference type="ChEBI" id="CHEBI:57692"/>
    </ligand>
</feature>
<feature type="binding site" evidence="1">
    <location>
        <position position="298"/>
    </location>
    <ligand>
        <name>FAD</name>
        <dbReference type="ChEBI" id="CHEBI:57692"/>
    </ligand>
</feature>
<feature type="binding site" evidence="1">
    <location>
        <position position="339"/>
    </location>
    <ligand>
        <name>FAD</name>
        <dbReference type="ChEBI" id="CHEBI:57692"/>
    </ligand>
</feature>
<gene>
    <name type="ordered locus">Cphamn1_1733</name>
</gene>